<evidence type="ECO:0000255" key="1">
    <source>
        <dbReference type="HAMAP-Rule" id="MF_01571"/>
    </source>
</evidence>
<comment type="function">
    <text evidence="1">Catalyzes the attachment of proline to tRNA(Pro) in a two-step reaction: proline is first activated by ATP to form Pro-AMP and then transferred to the acceptor end of tRNA(Pro).</text>
</comment>
<comment type="catalytic activity">
    <reaction evidence="1">
        <text>tRNA(Pro) + L-proline + ATP = L-prolyl-tRNA(Pro) + AMP + diphosphate</text>
        <dbReference type="Rhea" id="RHEA:14305"/>
        <dbReference type="Rhea" id="RHEA-COMP:9700"/>
        <dbReference type="Rhea" id="RHEA-COMP:9702"/>
        <dbReference type="ChEBI" id="CHEBI:30616"/>
        <dbReference type="ChEBI" id="CHEBI:33019"/>
        <dbReference type="ChEBI" id="CHEBI:60039"/>
        <dbReference type="ChEBI" id="CHEBI:78442"/>
        <dbReference type="ChEBI" id="CHEBI:78532"/>
        <dbReference type="ChEBI" id="CHEBI:456215"/>
        <dbReference type="EC" id="6.1.1.15"/>
    </reaction>
</comment>
<comment type="subunit">
    <text evidence="1">Homodimer.</text>
</comment>
<comment type="subcellular location">
    <subcellularLocation>
        <location evidence="1">Cytoplasm</location>
    </subcellularLocation>
</comment>
<comment type="domain">
    <text evidence="1">Consists of three domains: the N-terminal catalytic domain, the anticodon-binding domain and the C-terminal extension.</text>
</comment>
<comment type="similarity">
    <text evidence="1">Belongs to the class-II aminoacyl-tRNA synthetase family. ProS type 3 subfamily.</text>
</comment>
<accession>Q7X2P1</accession>
<gene>
    <name evidence="1" type="primary">proS</name>
</gene>
<sequence length="510" mass="56995">MIKHALSVTRDGDFAQWYQTVISEADMAEDSGVRGCMVIRPWGYGIWERIQRLLDDRIKATGHENCYFPLFIPLSYFEKEAEHVDGFAKEMAVVTHHRLIQKDGRLVPDPEAKLEEPLVVRPTSETVIGAAMSRWVQSWRDLPVLINQWANVVRWEMRTRMFLRTAEFLWQEGHTAHATVEEAQEETRKMLEVYRDFAETCLAMPVVAGEKPENERFPGAVSTFSIEAMMQDGKALQAGTSHFLGTTFSSAQDIKFQNSEGQFELAQTTSWGVSTRMIGGLIMVHGDDDGLRVPPMVAPWQIVIVPMLRDQPEDAATIDYCKSLQAELAKLTALGEPVRALLDLKAVKAQTKRWGWVKKGAPIVIEVGGRDVAGGNVSVIQRNKLYREDGKLDSRIMPRGDFVAEAAAILESIQQGLYLDARERLDSNIRRDVTDFDGLAAMFADSVKFPGWAEVSWAKPTGAELDAVVERLKALKLTFRNVPGTAAPAEGTCLFTGKPAVERILVARAY</sequence>
<feature type="chain" id="PRO_0000249150" description="Proline--tRNA ligase">
    <location>
        <begin position="1"/>
        <end position="510"/>
    </location>
</feature>
<keyword id="KW-0030">Aminoacyl-tRNA synthetase</keyword>
<keyword id="KW-0067">ATP-binding</keyword>
<keyword id="KW-0963">Cytoplasm</keyword>
<keyword id="KW-0436">Ligase</keyword>
<keyword id="KW-0547">Nucleotide-binding</keyword>
<keyword id="KW-0648">Protein biosynthesis</keyword>
<reference key="1">
    <citation type="journal article" date="2004" name="J. Ind. Microbiol. Biotechnol.">
        <title>Organization of genes required for gellan polysaccharide biosynthesis in Sphingomonas elodea ATCC 31461.</title>
        <authorList>
            <person name="Harding N.E."/>
            <person name="Patel Y.N."/>
            <person name="Coleman R.J."/>
        </authorList>
    </citation>
    <scope>NUCLEOTIDE SEQUENCE [GENOMIC DNA]</scope>
    <source>
        <strain>ATCC 31461 / PS-60</strain>
    </source>
</reference>
<proteinExistence type="inferred from homology"/>
<organism>
    <name type="scientific">Sphingomonas elodea</name>
    <dbReference type="NCBI Taxonomy" id="179878"/>
    <lineage>
        <taxon>Bacteria</taxon>
        <taxon>Pseudomonadati</taxon>
        <taxon>Pseudomonadota</taxon>
        <taxon>Alphaproteobacteria</taxon>
        <taxon>Sphingomonadales</taxon>
        <taxon>Sphingomonadaceae</taxon>
        <taxon>Sphingomonas</taxon>
    </lineage>
</organism>
<name>SYP_SPHEL</name>
<protein>
    <recommendedName>
        <fullName evidence="1">Proline--tRNA ligase</fullName>
        <ecNumber evidence="1">6.1.1.15</ecNumber>
    </recommendedName>
    <alternativeName>
        <fullName evidence="1">Prolyl-tRNA synthetase</fullName>
        <shortName evidence="1">ProRS</shortName>
    </alternativeName>
</protein>
<dbReference type="EC" id="6.1.1.15" evidence="1"/>
<dbReference type="EMBL" id="AY220099">
    <property type="protein sequence ID" value="AAP46176.1"/>
    <property type="molecule type" value="Genomic_DNA"/>
</dbReference>
<dbReference type="SMR" id="Q7X2P1"/>
<dbReference type="STRING" id="1081640.GCA_000226955_01697"/>
<dbReference type="GO" id="GO:0017101">
    <property type="term" value="C:aminoacyl-tRNA synthetase multienzyme complex"/>
    <property type="evidence" value="ECO:0007669"/>
    <property type="project" value="TreeGrafter"/>
</dbReference>
<dbReference type="GO" id="GO:0005737">
    <property type="term" value="C:cytoplasm"/>
    <property type="evidence" value="ECO:0007669"/>
    <property type="project" value="UniProtKB-SubCell"/>
</dbReference>
<dbReference type="GO" id="GO:0005524">
    <property type="term" value="F:ATP binding"/>
    <property type="evidence" value="ECO:0007669"/>
    <property type="project" value="UniProtKB-UniRule"/>
</dbReference>
<dbReference type="GO" id="GO:0004827">
    <property type="term" value="F:proline-tRNA ligase activity"/>
    <property type="evidence" value="ECO:0007669"/>
    <property type="project" value="UniProtKB-UniRule"/>
</dbReference>
<dbReference type="GO" id="GO:0006433">
    <property type="term" value="P:prolyl-tRNA aminoacylation"/>
    <property type="evidence" value="ECO:0007669"/>
    <property type="project" value="UniProtKB-UniRule"/>
</dbReference>
<dbReference type="CDD" id="cd00778">
    <property type="entry name" value="ProRS_core_arch_euk"/>
    <property type="match status" value="1"/>
</dbReference>
<dbReference type="FunFam" id="3.30.930.10:FF:000037">
    <property type="entry name" value="Proline--tRNA ligase"/>
    <property type="match status" value="1"/>
</dbReference>
<dbReference type="Gene3D" id="3.40.50.800">
    <property type="entry name" value="Anticodon-binding domain"/>
    <property type="match status" value="1"/>
</dbReference>
<dbReference type="Gene3D" id="3.30.930.10">
    <property type="entry name" value="Bira Bifunctional Protein, Domain 2"/>
    <property type="match status" value="1"/>
</dbReference>
<dbReference type="Gene3D" id="3.30.110.30">
    <property type="entry name" value="C-terminal domain of ProRS"/>
    <property type="match status" value="1"/>
</dbReference>
<dbReference type="HAMAP" id="MF_01571">
    <property type="entry name" value="Pro_tRNA_synth_type3"/>
    <property type="match status" value="1"/>
</dbReference>
<dbReference type="InterPro" id="IPR002314">
    <property type="entry name" value="aa-tRNA-synt_IIb"/>
</dbReference>
<dbReference type="InterPro" id="IPR006195">
    <property type="entry name" value="aa-tRNA-synth_II"/>
</dbReference>
<dbReference type="InterPro" id="IPR045864">
    <property type="entry name" value="aa-tRNA-synth_II/BPL/LPL"/>
</dbReference>
<dbReference type="InterPro" id="IPR004154">
    <property type="entry name" value="Anticodon-bd"/>
</dbReference>
<dbReference type="InterPro" id="IPR036621">
    <property type="entry name" value="Anticodon-bd_dom_sf"/>
</dbReference>
<dbReference type="InterPro" id="IPR004499">
    <property type="entry name" value="Pro-tRNA-ligase_IIa_arc-type"/>
</dbReference>
<dbReference type="InterPro" id="IPR016061">
    <property type="entry name" value="Pro-tRNA_ligase_II_C"/>
</dbReference>
<dbReference type="InterPro" id="IPR017449">
    <property type="entry name" value="Pro-tRNA_synth_II"/>
</dbReference>
<dbReference type="InterPro" id="IPR033721">
    <property type="entry name" value="ProRS_core_arch_euk"/>
</dbReference>
<dbReference type="PANTHER" id="PTHR43382:SF2">
    <property type="entry name" value="BIFUNCTIONAL GLUTAMATE_PROLINE--TRNA LIGASE"/>
    <property type="match status" value="1"/>
</dbReference>
<dbReference type="PANTHER" id="PTHR43382">
    <property type="entry name" value="PROLYL-TRNA SYNTHETASE"/>
    <property type="match status" value="1"/>
</dbReference>
<dbReference type="Pfam" id="PF03129">
    <property type="entry name" value="HGTP_anticodon"/>
    <property type="match status" value="1"/>
</dbReference>
<dbReference type="Pfam" id="PF00587">
    <property type="entry name" value="tRNA-synt_2b"/>
    <property type="match status" value="1"/>
</dbReference>
<dbReference type="SMART" id="SM00946">
    <property type="entry name" value="ProRS-C_1"/>
    <property type="match status" value="1"/>
</dbReference>
<dbReference type="SUPFAM" id="SSF64586">
    <property type="entry name" value="C-terminal domain of ProRS"/>
    <property type="match status" value="1"/>
</dbReference>
<dbReference type="SUPFAM" id="SSF52954">
    <property type="entry name" value="Class II aaRS ABD-related"/>
    <property type="match status" value="1"/>
</dbReference>
<dbReference type="SUPFAM" id="SSF55681">
    <property type="entry name" value="Class II aaRS and biotin synthetases"/>
    <property type="match status" value="1"/>
</dbReference>
<dbReference type="PROSITE" id="PS50862">
    <property type="entry name" value="AA_TRNA_LIGASE_II"/>
    <property type="match status" value="1"/>
</dbReference>